<feature type="chain" id="PRO_1000010113" description="Ribosomal RNA small subunit methyltransferase G">
    <location>
        <begin position="1"/>
        <end position="208"/>
    </location>
</feature>
<feature type="binding site" evidence="1">
    <location>
        <position position="73"/>
    </location>
    <ligand>
        <name>S-adenosyl-L-methionine</name>
        <dbReference type="ChEBI" id="CHEBI:59789"/>
    </ligand>
</feature>
<feature type="binding site" evidence="1">
    <location>
        <position position="78"/>
    </location>
    <ligand>
        <name>S-adenosyl-L-methionine</name>
        <dbReference type="ChEBI" id="CHEBI:59789"/>
    </ligand>
</feature>
<feature type="binding site" evidence="1">
    <location>
        <begin position="124"/>
        <end position="125"/>
    </location>
    <ligand>
        <name>S-adenosyl-L-methionine</name>
        <dbReference type="ChEBI" id="CHEBI:59789"/>
    </ligand>
</feature>
<feature type="binding site" evidence="1">
    <location>
        <position position="139"/>
    </location>
    <ligand>
        <name>S-adenosyl-L-methionine</name>
        <dbReference type="ChEBI" id="CHEBI:59789"/>
    </ligand>
</feature>
<name>RSMG_AERS4</name>
<protein>
    <recommendedName>
        <fullName evidence="1">Ribosomal RNA small subunit methyltransferase G</fullName>
        <ecNumber evidence="1">2.1.1.170</ecNumber>
    </recommendedName>
    <alternativeName>
        <fullName evidence="1">16S rRNA 7-methylguanosine methyltransferase</fullName>
        <shortName evidence="1">16S rRNA m7G methyltransferase</shortName>
    </alternativeName>
</protein>
<organism>
    <name type="scientific">Aeromonas salmonicida (strain A449)</name>
    <dbReference type="NCBI Taxonomy" id="382245"/>
    <lineage>
        <taxon>Bacteria</taxon>
        <taxon>Pseudomonadati</taxon>
        <taxon>Pseudomonadota</taxon>
        <taxon>Gammaproteobacteria</taxon>
        <taxon>Aeromonadales</taxon>
        <taxon>Aeromonadaceae</taxon>
        <taxon>Aeromonas</taxon>
    </lineage>
</organism>
<reference key="1">
    <citation type="journal article" date="2008" name="BMC Genomics">
        <title>The genome of Aeromonas salmonicida subsp. salmonicida A449: insights into the evolution of a fish pathogen.</title>
        <authorList>
            <person name="Reith M.E."/>
            <person name="Singh R.K."/>
            <person name="Curtis B."/>
            <person name="Boyd J.M."/>
            <person name="Bouevitch A."/>
            <person name="Kimball J."/>
            <person name="Munholland J."/>
            <person name="Murphy C."/>
            <person name="Sarty D."/>
            <person name="Williams J."/>
            <person name="Nash J.H."/>
            <person name="Johnson S.C."/>
            <person name="Brown L.L."/>
        </authorList>
    </citation>
    <scope>NUCLEOTIDE SEQUENCE [LARGE SCALE GENOMIC DNA]</scope>
    <source>
        <strain>A449</strain>
    </source>
</reference>
<gene>
    <name evidence="1" type="primary">rsmG</name>
    <name type="ordered locus">ASA_4360</name>
</gene>
<accession>A4STQ3</accession>
<proteinExistence type="inferred from homology"/>
<comment type="function">
    <text evidence="1">Specifically methylates the N7 position of guanine in position 527 of 16S rRNA.</text>
</comment>
<comment type="catalytic activity">
    <reaction evidence="1">
        <text>guanosine(527) in 16S rRNA + S-adenosyl-L-methionine = N(7)-methylguanosine(527) in 16S rRNA + S-adenosyl-L-homocysteine</text>
        <dbReference type="Rhea" id="RHEA:42732"/>
        <dbReference type="Rhea" id="RHEA-COMP:10209"/>
        <dbReference type="Rhea" id="RHEA-COMP:10210"/>
        <dbReference type="ChEBI" id="CHEBI:57856"/>
        <dbReference type="ChEBI" id="CHEBI:59789"/>
        <dbReference type="ChEBI" id="CHEBI:74269"/>
        <dbReference type="ChEBI" id="CHEBI:74480"/>
        <dbReference type="EC" id="2.1.1.170"/>
    </reaction>
</comment>
<comment type="subcellular location">
    <subcellularLocation>
        <location evidence="1">Cytoplasm</location>
    </subcellularLocation>
</comment>
<comment type="similarity">
    <text evidence="1">Belongs to the methyltransferase superfamily. RNA methyltransferase RsmG family.</text>
</comment>
<dbReference type="EC" id="2.1.1.170" evidence="1"/>
<dbReference type="EMBL" id="CP000644">
    <property type="protein sequence ID" value="ABO92275.1"/>
    <property type="molecule type" value="Genomic_DNA"/>
</dbReference>
<dbReference type="RefSeq" id="WP_005319605.1">
    <property type="nucleotide sequence ID" value="NC_009348.1"/>
</dbReference>
<dbReference type="SMR" id="A4STQ3"/>
<dbReference type="STRING" id="29491.GCA_000820065_00581"/>
<dbReference type="KEGG" id="asa:ASA_4360"/>
<dbReference type="PATRIC" id="fig|382245.13.peg.4318"/>
<dbReference type="eggNOG" id="COG0357">
    <property type="taxonomic scope" value="Bacteria"/>
</dbReference>
<dbReference type="HOGENOM" id="CLU_065341_2_0_6"/>
<dbReference type="Proteomes" id="UP000000225">
    <property type="component" value="Chromosome"/>
</dbReference>
<dbReference type="GO" id="GO:0005829">
    <property type="term" value="C:cytosol"/>
    <property type="evidence" value="ECO:0007669"/>
    <property type="project" value="TreeGrafter"/>
</dbReference>
<dbReference type="GO" id="GO:0070043">
    <property type="term" value="F:rRNA (guanine-N7-)-methyltransferase activity"/>
    <property type="evidence" value="ECO:0007669"/>
    <property type="project" value="UniProtKB-UniRule"/>
</dbReference>
<dbReference type="CDD" id="cd02440">
    <property type="entry name" value="AdoMet_MTases"/>
    <property type="match status" value="1"/>
</dbReference>
<dbReference type="FunFam" id="3.40.50.150:FF:000032">
    <property type="entry name" value="Ribosomal RNA small subunit methyltransferase G"/>
    <property type="match status" value="1"/>
</dbReference>
<dbReference type="Gene3D" id="3.40.50.150">
    <property type="entry name" value="Vaccinia Virus protein VP39"/>
    <property type="match status" value="1"/>
</dbReference>
<dbReference type="HAMAP" id="MF_00074">
    <property type="entry name" value="16SrRNA_methyltr_G"/>
    <property type="match status" value="1"/>
</dbReference>
<dbReference type="InterPro" id="IPR003682">
    <property type="entry name" value="rRNA_ssu_MeTfrase_G"/>
</dbReference>
<dbReference type="InterPro" id="IPR029063">
    <property type="entry name" value="SAM-dependent_MTases_sf"/>
</dbReference>
<dbReference type="NCBIfam" id="TIGR00138">
    <property type="entry name" value="rsmG_gidB"/>
    <property type="match status" value="1"/>
</dbReference>
<dbReference type="PANTHER" id="PTHR31760">
    <property type="entry name" value="S-ADENOSYL-L-METHIONINE-DEPENDENT METHYLTRANSFERASES SUPERFAMILY PROTEIN"/>
    <property type="match status" value="1"/>
</dbReference>
<dbReference type="PANTHER" id="PTHR31760:SF0">
    <property type="entry name" value="S-ADENOSYL-L-METHIONINE-DEPENDENT METHYLTRANSFERASES SUPERFAMILY PROTEIN"/>
    <property type="match status" value="1"/>
</dbReference>
<dbReference type="Pfam" id="PF02527">
    <property type="entry name" value="GidB"/>
    <property type="match status" value="1"/>
</dbReference>
<dbReference type="PIRSF" id="PIRSF003078">
    <property type="entry name" value="GidB"/>
    <property type="match status" value="1"/>
</dbReference>
<dbReference type="SUPFAM" id="SSF53335">
    <property type="entry name" value="S-adenosyl-L-methionine-dependent methyltransferases"/>
    <property type="match status" value="1"/>
</dbReference>
<sequence>MLQRLNCLLMQAGIVITDTQKTQLVQLVELLHKWNKAYNLTSVRDPDAMLVKHILDSLVVSPHLHGERFIDVGTGPGLPGLPLAIINPDKQFVLLDSLGKRINFIRQVIQVLGLTNVTPVKSRVEEYQPDVGFDCVLSRAFASLEDMLSWCHHLPSEQGSFLALKGQYPEQELAQLPANIRLVACHELRVPELEGERHLLEFKHIQPE</sequence>
<evidence type="ECO:0000255" key="1">
    <source>
        <dbReference type="HAMAP-Rule" id="MF_00074"/>
    </source>
</evidence>
<keyword id="KW-0963">Cytoplasm</keyword>
<keyword id="KW-0489">Methyltransferase</keyword>
<keyword id="KW-0698">rRNA processing</keyword>
<keyword id="KW-0949">S-adenosyl-L-methionine</keyword>
<keyword id="KW-0808">Transferase</keyword>